<gene>
    <name type="ORF">UL30</name>
</gene>
<protein>
    <recommendedName>
        <fullName>DNA polymerase catalytic subunit</fullName>
        <ecNumber>2.7.7.7</ecNumber>
        <ecNumber>3.1.26.4</ecNumber>
    </recommendedName>
</protein>
<organism>
    <name type="scientific">Human herpesvirus 2 (strain 186)</name>
    <name type="common">HHV-2</name>
    <name type="synonym">Human herpes simplex virus 2</name>
    <dbReference type="NCBI Taxonomy" id="10312"/>
    <lineage>
        <taxon>Viruses</taxon>
        <taxon>Duplodnaviria</taxon>
        <taxon>Heunggongvirae</taxon>
        <taxon>Peploviricota</taxon>
        <taxon>Herviviricetes</taxon>
        <taxon>Herpesvirales</taxon>
        <taxon>Orthoherpesviridae</taxon>
        <taxon>Alphaherpesvirinae</taxon>
        <taxon>Simplexvirus</taxon>
        <taxon>Simplexvirus humanalpha2</taxon>
        <taxon>Human herpesvirus 2</taxon>
    </lineage>
</organism>
<name>DPOL_HHV21</name>
<reference key="1">
    <citation type="journal article" date="1987" name="Gene">
        <title>Nucleotide sequence of the DNA polymerase gene of herpes simplex virus type 2 and comparison with the type 1 counterpart.</title>
        <authorList>
            <person name="Tsurumi T."/>
            <person name="Maeno K."/>
            <person name="Nishiyama Y."/>
        </authorList>
    </citation>
    <scope>NUCLEOTIDE SEQUENCE [GENOMIC DNA]</scope>
</reference>
<dbReference type="EC" id="2.7.7.7"/>
<dbReference type="EC" id="3.1.26.4"/>
<dbReference type="EMBL" id="M16321">
    <property type="protein sequence ID" value="AAA45853.1"/>
    <property type="molecule type" value="Genomic_DNA"/>
</dbReference>
<dbReference type="PIR" id="A27315">
    <property type="entry name" value="DJBE21"/>
</dbReference>
<dbReference type="SMR" id="P07918"/>
<dbReference type="GO" id="GO:0042025">
    <property type="term" value="C:host cell nucleus"/>
    <property type="evidence" value="ECO:0007669"/>
    <property type="project" value="UniProtKB-SubCell"/>
</dbReference>
<dbReference type="GO" id="GO:0003677">
    <property type="term" value="F:DNA binding"/>
    <property type="evidence" value="ECO:0007669"/>
    <property type="project" value="UniProtKB-KW"/>
</dbReference>
<dbReference type="GO" id="GO:0003887">
    <property type="term" value="F:DNA-directed DNA polymerase activity"/>
    <property type="evidence" value="ECO:0007669"/>
    <property type="project" value="UniProtKB-KW"/>
</dbReference>
<dbReference type="GO" id="GO:0000166">
    <property type="term" value="F:nucleotide binding"/>
    <property type="evidence" value="ECO:0007669"/>
    <property type="project" value="InterPro"/>
</dbReference>
<dbReference type="GO" id="GO:0004523">
    <property type="term" value="F:RNA-DNA hybrid ribonuclease activity"/>
    <property type="evidence" value="ECO:0007669"/>
    <property type="project" value="UniProtKB-EC"/>
</dbReference>
<dbReference type="GO" id="GO:0006261">
    <property type="term" value="P:DNA-templated DNA replication"/>
    <property type="evidence" value="ECO:0007669"/>
    <property type="project" value="TreeGrafter"/>
</dbReference>
<dbReference type="GO" id="GO:0039693">
    <property type="term" value="P:viral DNA genome replication"/>
    <property type="evidence" value="ECO:0007669"/>
    <property type="project" value="UniProtKB-KW"/>
</dbReference>
<dbReference type="FunFam" id="1.10.287.690:FF:000006">
    <property type="entry name" value="DNA polymerase"/>
    <property type="match status" value="1"/>
</dbReference>
<dbReference type="FunFam" id="3.30.342.10:FF:000013">
    <property type="entry name" value="DNA polymerase"/>
    <property type="match status" value="1"/>
</dbReference>
<dbReference type="FunFam" id="3.30.420.10:FF:000004">
    <property type="entry name" value="DNA polymerase"/>
    <property type="match status" value="1"/>
</dbReference>
<dbReference type="FunFam" id="1.10.132.60:FF:000011">
    <property type="entry name" value="DNA polymerase catalytic subunit"/>
    <property type="match status" value="1"/>
</dbReference>
<dbReference type="Gene3D" id="1.10.132.60">
    <property type="entry name" value="DNA polymerase family B, C-terminal domain"/>
    <property type="match status" value="1"/>
</dbReference>
<dbReference type="Gene3D" id="3.30.342.10">
    <property type="entry name" value="DNA Polymerase, chain B, domain 1"/>
    <property type="match status" value="1"/>
</dbReference>
<dbReference type="Gene3D" id="1.10.287.690">
    <property type="entry name" value="Helix hairpin bin"/>
    <property type="match status" value="1"/>
</dbReference>
<dbReference type="Gene3D" id="3.90.1600.10">
    <property type="entry name" value="Palm domain of DNA polymerase"/>
    <property type="match status" value="1"/>
</dbReference>
<dbReference type="Gene3D" id="3.30.420.10">
    <property type="entry name" value="Ribonuclease H-like superfamily/Ribonuclease H"/>
    <property type="match status" value="1"/>
</dbReference>
<dbReference type="InterPro" id="IPR006172">
    <property type="entry name" value="DNA-dir_DNA_pol_B"/>
</dbReference>
<dbReference type="InterPro" id="IPR017964">
    <property type="entry name" value="DNA-dir_DNA_pol_B_CS"/>
</dbReference>
<dbReference type="InterPro" id="IPR006133">
    <property type="entry name" value="DNA-dir_DNA_pol_B_exonuc"/>
</dbReference>
<dbReference type="InterPro" id="IPR006134">
    <property type="entry name" value="DNA-dir_DNA_pol_B_multi_dom"/>
</dbReference>
<dbReference type="InterPro" id="IPR043502">
    <property type="entry name" value="DNA/RNA_pol_sf"/>
</dbReference>
<dbReference type="InterPro" id="IPR042087">
    <property type="entry name" value="DNA_pol_B_thumb"/>
</dbReference>
<dbReference type="InterPro" id="IPR023211">
    <property type="entry name" value="DNA_pol_palm_dom_sf"/>
</dbReference>
<dbReference type="InterPro" id="IPR050240">
    <property type="entry name" value="DNA_pol_type-B"/>
</dbReference>
<dbReference type="InterPro" id="IPR021639">
    <property type="entry name" value="DNAPolymera_Pol_C"/>
</dbReference>
<dbReference type="InterPro" id="IPR012337">
    <property type="entry name" value="RNaseH-like_sf"/>
</dbReference>
<dbReference type="InterPro" id="IPR036397">
    <property type="entry name" value="RNaseH_sf"/>
</dbReference>
<dbReference type="PANTHER" id="PTHR10322">
    <property type="entry name" value="DNA POLYMERASE CATALYTIC SUBUNIT"/>
    <property type="match status" value="1"/>
</dbReference>
<dbReference type="PANTHER" id="PTHR10322:SF23">
    <property type="entry name" value="DNA POLYMERASE DELTA CATALYTIC SUBUNIT"/>
    <property type="match status" value="1"/>
</dbReference>
<dbReference type="Pfam" id="PF00136">
    <property type="entry name" value="DNA_pol_B"/>
    <property type="match status" value="1"/>
</dbReference>
<dbReference type="Pfam" id="PF03104">
    <property type="entry name" value="DNA_pol_B_exo1"/>
    <property type="match status" value="1"/>
</dbReference>
<dbReference type="Pfam" id="PF11590">
    <property type="entry name" value="DNAPolymera_Pol"/>
    <property type="match status" value="1"/>
</dbReference>
<dbReference type="PRINTS" id="PR00106">
    <property type="entry name" value="DNAPOLB"/>
</dbReference>
<dbReference type="SMART" id="SM00486">
    <property type="entry name" value="POLBc"/>
    <property type="match status" value="1"/>
</dbReference>
<dbReference type="SUPFAM" id="SSF56672">
    <property type="entry name" value="DNA/RNA polymerases"/>
    <property type="match status" value="1"/>
</dbReference>
<dbReference type="SUPFAM" id="SSF53098">
    <property type="entry name" value="Ribonuclease H-like"/>
    <property type="match status" value="1"/>
</dbReference>
<dbReference type="PROSITE" id="PS00116">
    <property type="entry name" value="DNA_POLYMERASE_B"/>
    <property type="match status" value="1"/>
</dbReference>
<feature type="chain" id="PRO_0000046515" description="DNA polymerase catalytic subunit">
    <location>
        <begin position="1"/>
        <end position="1240"/>
    </location>
</feature>
<feature type="region of interest" description="Disordered" evidence="2">
    <location>
        <begin position="1"/>
        <end position="65"/>
    </location>
</feature>
<feature type="region of interest" description="Disordered" evidence="2">
    <location>
        <begin position="646"/>
        <end position="695"/>
    </location>
</feature>
<feature type="region of interest" description="Disordered" evidence="2">
    <location>
        <begin position="1103"/>
        <end position="1139"/>
    </location>
</feature>
<feature type="compositionally biased region" description="Low complexity" evidence="2">
    <location>
        <begin position="1"/>
        <end position="26"/>
    </location>
</feature>
<feature type="compositionally biased region" description="Polar residues" evidence="2">
    <location>
        <begin position="44"/>
        <end position="56"/>
    </location>
</feature>
<feature type="compositionally biased region" description="Acidic residues" evidence="2">
    <location>
        <begin position="669"/>
        <end position="688"/>
    </location>
</feature>
<keyword id="KW-0235">DNA replication</keyword>
<keyword id="KW-0238">DNA-binding</keyword>
<keyword id="KW-0239">DNA-directed DNA polymerase</keyword>
<keyword id="KW-0255">Endonuclease</keyword>
<keyword id="KW-1048">Host nucleus</keyword>
<keyword id="KW-0378">Hydrolase</keyword>
<keyword id="KW-0511">Multifunctional enzyme</keyword>
<keyword id="KW-0540">Nuclease</keyword>
<keyword id="KW-0548">Nucleotidyltransferase</keyword>
<keyword id="KW-0808">Transferase</keyword>
<keyword id="KW-1194">Viral DNA replication</keyword>
<proteinExistence type="inferred from homology"/>
<organismHost>
    <name type="scientific">Homo sapiens</name>
    <name type="common">Human</name>
    <dbReference type="NCBI Taxonomy" id="9606"/>
</organismHost>
<comment type="function">
    <text evidence="1">Replicates viral genomic DNA. The replication complex is composed of six viral proteins: the DNA polymerase, processivity factor, primase, primase-associated factor, helicase, and ssDNA-binding protein. Additionally, the polymerase contains an intrinsic ribonuclease H (RNase H) activity that specifically degrades RNA/DNA heteroduplexes or duplex DNA substrates in the 5' to 3' direction. Therefore, it can catalyze the excision of the RNA primers that initiate the synthesis of Okazaki fragments at a replication fork during viral DNA replication (By similarity).</text>
</comment>
<comment type="catalytic activity">
    <reaction>
        <text>DNA(n) + a 2'-deoxyribonucleoside 5'-triphosphate = DNA(n+1) + diphosphate</text>
        <dbReference type="Rhea" id="RHEA:22508"/>
        <dbReference type="Rhea" id="RHEA-COMP:17339"/>
        <dbReference type="Rhea" id="RHEA-COMP:17340"/>
        <dbReference type="ChEBI" id="CHEBI:33019"/>
        <dbReference type="ChEBI" id="CHEBI:61560"/>
        <dbReference type="ChEBI" id="CHEBI:173112"/>
        <dbReference type="EC" id="2.7.7.7"/>
    </reaction>
</comment>
<comment type="catalytic activity">
    <reaction>
        <text>Endonucleolytic cleavage to 5'-phosphomonoester.</text>
        <dbReference type="EC" id="3.1.26.4"/>
    </reaction>
</comment>
<comment type="subunit">
    <text evidence="1">Forms a complex with the ssDNA-binding protein UL29, the DNA polymerase processivity factor, and the alkaline exonuclease. Interacts with the putative helicase-primase complex subunit UL8; this interaction may coordinate leading and lagging strand DNA synthesis at the replication fork (By similarity).</text>
</comment>
<comment type="subcellular location">
    <subcellularLocation>
        <location evidence="1">Host nucleus</location>
    </subcellularLocation>
    <text evidence="1">The protein is present at discrete sites in nuclei, called replication compartments where viral DNA replication occurs.</text>
</comment>
<comment type="similarity">
    <text evidence="3">Belongs to the DNA polymerase type-B family.</text>
</comment>
<sequence>MFCAAGGPASPGGKSAARAASGFFAPHNPRGATQTAPPPCRRQNFYNPHLAQTGTQPKAPGPAQRHTYYSECDEFRFIAPRSLDEDAPAEQRTGVHDGRLRRAPKVYCGGDERDVLRVGPEGFWPRRLRLWGGADHAPEGFDPTVTVFHVYDILEHVEHAYSMRAAQLHERFMDAITPAGTVITLLGLTPEGHRVAVHVYGTRQYFYMNKAEVDRHLQCRAPRDLCERLAAALRESPGASFRGISADHFEAEVVERADVYYYETRPTLYYRVFVRSGRALAYLCDNFCPAIRKYEGGVDATTRFILDNPGFVTFGWYRLKPGRGNAPAQPRPPTAFGTSSDVEFNCTADNLAVEGAMCDLPAYKLMCFDIECKAGGEDELAFPVAERPEDLVIQISCLLYDLSTTALEHILLFSLGSCDLPESHLSDLASRGLPAPVVLEFDSEFEMLLAFMTFVKQYGPEFVTGYNIINFDWPFVLTKLTEIYKVPLDGYGRMNGRGVFRVWDIGQSHFQKRSKIKVNGMVNIDMYGIITDKVKLSSYKLNAVAEAVLKDKKKDLSYRDIPAYYASGPAQRGVIGEYCVQDSLLVGQLFFKFLPHLELSAVARLAGINITRTIYDGQQIRVFTCLLRLAGQKGFILPDTQGRFRGLDKEAPKRPAVPRGEGERPGDGNGDEDKDDDEDGDEDGDEREEVARETGGRHVGYQGARVLDPTSGFHVDPVVVFDFASLYPSIIQAHNLCFSTLSLRPEAVAHLEADRDYLEIEVGGRRLFFVKAHVRESLLSILLRDWLAMRKQIRSRIPQSPPEEAVLLDKQQAAIKVVCNSVYGFTGVQHGLLPCLHVAATVTTIGREMLLATRAYVHARWAEFDQLLADFPEAAGMRAPGPYSMRIIYGDTDSIFVLCRGLTGEALVAMGDKMASHISRALFLPPIKLECEKTFTKLLLIAKKKYIGVICGGKMLIKGVDLVRKNNCAFINRTSRALVDLLFYDDTVSGAAAALAERPAEEWLARPLPEGLQAFGAVLVDAHRRITDPERDIQDFVLTAELSRHPRAYTNKRLAHLTVYYKLMARRAQVPSIKDRIPYVIVAQTREVEETVARLAALRELDAAAPGDEPAPPAALPSPAKRPRETPSHADPPGGASKPRKLLVSELAEDPGYAIARGVPLNTDYYFSHLLGAACVTFKALFGNNAKITESLLKRFIPETWHPPDDVAARLRAAGFGPAGAGATAEETRRMLHRAFDTLA</sequence>
<evidence type="ECO:0000250" key="1"/>
<evidence type="ECO:0000256" key="2">
    <source>
        <dbReference type="SAM" id="MobiDB-lite"/>
    </source>
</evidence>
<evidence type="ECO:0000305" key="3"/>
<accession>P07918</accession>